<organism>
    <name type="scientific">Methanococcus aeolicus (strain ATCC BAA-1280 / DSM 17508 / OCM 812 / Nankai-3)</name>
    <dbReference type="NCBI Taxonomy" id="419665"/>
    <lineage>
        <taxon>Archaea</taxon>
        <taxon>Methanobacteriati</taxon>
        <taxon>Methanobacteriota</taxon>
        <taxon>Methanomada group</taxon>
        <taxon>Methanococci</taxon>
        <taxon>Methanococcales</taxon>
        <taxon>Methanococcaceae</taxon>
        <taxon>Methanococcus</taxon>
    </lineage>
</organism>
<dbReference type="EC" id="1.3.-.-" evidence="1"/>
<dbReference type="EMBL" id="CP000743">
    <property type="protein sequence ID" value="ABR56883.1"/>
    <property type="molecule type" value="Genomic_DNA"/>
</dbReference>
<dbReference type="RefSeq" id="WP_011974015.1">
    <property type="nucleotide sequence ID" value="NC_009635.1"/>
</dbReference>
<dbReference type="SMR" id="A6UWL1"/>
<dbReference type="STRING" id="419665.Maeo_1307"/>
<dbReference type="GeneID" id="5327399"/>
<dbReference type="KEGG" id="mae:Maeo_1307"/>
<dbReference type="eggNOG" id="arCOG00570">
    <property type="taxonomic scope" value="Archaea"/>
</dbReference>
<dbReference type="HOGENOM" id="CLU_024648_0_0_2"/>
<dbReference type="OrthoDB" id="6062at2157"/>
<dbReference type="UniPathway" id="UPA00940"/>
<dbReference type="Proteomes" id="UP000001106">
    <property type="component" value="Chromosome"/>
</dbReference>
<dbReference type="GO" id="GO:0016020">
    <property type="term" value="C:membrane"/>
    <property type="evidence" value="ECO:0007669"/>
    <property type="project" value="GOC"/>
</dbReference>
<dbReference type="GO" id="GO:0071949">
    <property type="term" value="F:FAD binding"/>
    <property type="evidence" value="ECO:0007669"/>
    <property type="project" value="InterPro"/>
</dbReference>
<dbReference type="GO" id="GO:0045550">
    <property type="term" value="F:geranylgeranyl reductase activity"/>
    <property type="evidence" value="ECO:0007669"/>
    <property type="project" value="InterPro"/>
</dbReference>
<dbReference type="GO" id="GO:0016628">
    <property type="term" value="F:oxidoreductase activity, acting on the CH-CH group of donors, NAD or NADP as acceptor"/>
    <property type="evidence" value="ECO:0007669"/>
    <property type="project" value="InterPro"/>
</dbReference>
<dbReference type="GO" id="GO:0046474">
    <property type="term" value="P:glycerophospholipid biosynthetic process"/>
    <property type="evidence" value="ECO:0007669"/>
    <property type="project" value="UniProtKB-UniRule"/>
</dbReference>
<dbReference type="GO" id="GO:0046467">
    <property type="term" value="P:membrane lipid biosynthetic process"/>
    <property type="evidence" value="ECO:0007669"/>
    <property type="project" value="InterPro"/>
</dbReference>
<dbReference type="Gene3D" id="3.30.9.10">
    <property type="entry name" value="D-Amino Acid Oxidase, subunit A, domain 2"/>
    <property type="match status" value="1"/>
</dbReference>
<dbReference type="Gene3D" id="3.50.50.60">
    <property type="entry name" value="FAD/NAD(P)-binding domain"/>
    <property type="match status" value="1"/>
</dbReference>
<dbReference type="HAMAP" id="MF_01287">
    <property type="entry name" value="DGGGPL_reductase"/>
    <property type="match status" value="1"/>
</dbReference>
<dbReference type="InterPro" id="IPR023590">
    <property type="entry name" value="DGGGPL_reductase"/>
</dbReference>
<dbReference type="InterPro" id="IPR002938">
    <property type="entry name" value="FAD-bd"/>
</dbReference>
<dbReference type="InterPro" id="IPR036188">
    <property type="entry name" value="FAD/NAD-bd_sf"/>
</dbReference>
<dbReference type="InterPro" id="IPR011777">
    <property type="entry name" value="Geranylgeranyl_Rdtase_fam"/>
</dbReference>
<dbReference type="InterPro" id="IPR050407">
    <property type="entry name" value="Geranylgeranyl_reductase"/>
</dbReference>
<dbReference type="InterPro" id="IPR054715">
    <property type="entry name" value="GGR_cat"/>
</dbReference>
<dbReference type="NCBIfam" id="TIGR02032">
    <property type="entry name" value="GG-red-SF"/>
    <property type="match status" value="1"/>
</dbReference>
<dbReference type="PANTHER" id="PTHR42685:SF18">
    <property type="entry name" value="DIGERANYLGERANYLGLYCEROPHOSPHOLIPID REDUCTASE"/>
    <property type="match status" value="1"/>
</dbReference>
<dbReference type="PANTHER" id="PTHR42685">
    <property type="entry name" value="GERANYLGERANYL DIPHOSPHATE REDUCTASE"/>
    <property type="match status" value="1"/>
</dbReference>
<dbReference type="Pfam" id="PF01494">
    <property type="entry name" value="FAD_binding_3"/>
    <property type="match status" value="1"/>
</dbReference>
<dbReference type="Pfam" id="PF22578">
    <property type="entry name" value="GGR_cat"/>
    <property type="match status" value="1"/>
</dbReference>
<dbReference type="PRINTS" id="PR00420">
    <property type="entry name" value="RNGMNOXGNASE"/>
</dbReference>
<dbReference type="SUPFAM" id="SSF51905">
    <property type="entry name" value="FAD/NAD(P)-binding domain"/>
    <property type="match status" value="1"/>
</dbReference>
<keyword id="KW-0274">FAD</keyword>
<keyword id="KW-0285">Flavoprotein</keyword>
<keyword id="KW-0444">Lipid biosynthesis</keyword>
<keyword id="KW-0443">Lipid metabolism</keyword>
<keyword id="KW-0560">Oxidoreductase</keyword>
<keyword id="KW-0594">Phospholipid biosynthesis</keyword>
<keyword id="KW-1208">Phospholipid metabolism</keyword>
<accession>A6UWL1</accession>
<name>GGR_META3</name>
<protein>
    <recommendedName>
        <fullName evidence="1">Digeranylgeranylglycerophospholipid reductase</fullName>
        <shortName evidence="1">DGGGPL reductase</shortName>
        <ecNumber evidence="1">1.3.-.-</ecNumber>
    </recommendedName>
    <alternativeName>
        <fullName evidence="1">2,3-bis-O-geranylgeranylglyceryl phosphate reductase</fullName>
    </alternativeName>
    <alternativeName>
        <fullName evidence="1">Geranylgeranyl reductase</fullName>
        <shortName evidence="1">GGR</shortName>
    </alternativeName>
</protein>
<gene>
    <name type="ordered locus">Maeo_1307</name>
</gene>
<comment type="function">
    <text evidence="1">Is involved in the reduction of 2,3-digeranylgeranylglycerophospholipids (unsaturated archaeols) into 2,3-diphytanylglycerophospholipids (saturated archaeols) in the biosynthesis of archaeal membrane lipids. Catalyzes the formation of archaetidic acid (2,3-di-O-phytanyl-sn-glyceryl phosphate) from 2,3-di-O-geranylgeranylglyceryl phosphate (DGGGP) via the hydrogenation of each double bond of the isoprenoid chains. Is also probably able to reduce double bonds of geranyl groups in CDP-2,3-bis-O-(geranylgeranyl)-sn-glycerol and archaetidylserine, thus acting at various stages in the biosynthesis of archaeal membrane lipids.</text>
</comment>
<comment type="catalytic activity">
    <reaction evidence="1">
        <text>a 2,3-bis-O-phytanyl-sn-glycerol 1-phospholipid + 8 A = a 2,3-bis-O-(geranylgeranyl)-sn-glycerol 1-phospholipid + 8 AH2</text>
        <dbReference type="Rhea" id="RHEA:64376"/>
        <dbReference type="ChEBI" id="CHEBI:13193"/>
        <dbReference type="ChEBI" id="CHEBI:17499"/>
        <dbReference type="ChEBI" id="CHEBI:138139"/>
        <dbReference type="ChEBI" id="CHEBI:138140"/>
    </reaction>
    <physiologicalReaction direction="right-to-left" evidence="1">
        <dbReference type="Rhea" id="RHEA:64378"/>
    </physiologicalReaction>
</comment>
<comment type="catalytic activity">
    <reaction evidence="1">
        <text>2,3-bis-O-(phytanyl)-sn-glycerol 1-phosphate + 8 A = 2,3-bis-O-(geranylgeranyl)-sn-glycerol 1-phosphate + 8 AH2</text>
        <dbReference type="Rhea" id="RHEA:64368"/>
        <dbReference type="ChEBI" id="CHEBI:13193"/>
        <dbReference type="ChEBI" id="CHEBI:17499"/>
        <dbReference type="ChEBI" id="CHEBI:58837"/>
        <dbReference type="ChEBI" id="CHEBI:73125"/>
    </reaction>
    <physiologicalReaction direction="right-to-left" evidence="1">
        <dbReference type="Rhea" id="RHEA:64370"/>
    </physiologicalReaction>
</comment>
<comment type="catalytic activity">
    <reaction evidence="1">
        <text>CDP-2,3-bis-O-(geranylgeranyl)-sn-glycerol + 8 AH2 = CDP-2,3-bis-O-(phytanyl)-sn-glycerol + 8 A</text>
        <dbReference type="Rhea" id="RHEA:84207"/>
        <dbReference type="ChEBI" id="CHEBI:13193"/>
        <dbReference type="ChEBI" id="CHEBI:17499"/>
        <dbReference type="ChEBI" id="CHEBI:58838"/>
        <dbReference type="ChEBI" id="CHEBI:74004"/>
    </reaction>
    <physiologicalReaction direction="left-to-right" evidence="1">
        <dbReference type="Rhea" id="RHEA:84208"/>
    </physiologicalReaction>
</comment>
<comment type="catalytic activity">
    <reaction evidence="1">
        <text>archaetidylserine + 8 AH2 = 2,3-bis-O-phytanyl-sn-glycero-3-phospho-L-serine + 8 A</text>
        <dbReference type="Rhea" id="RHEA:84215"/>
        <dbReference type="ChEBI" id="CHEBI:13193"/>
        <dbReference type="ChEBI" id="CHEBI:17499"/>
        <dbReference type="ChEBI" id="CHEBI:71517"/>
        <dbReference type="ChEBI" id="CHEBI:74853"/>
    </reaction>
    <physiologicalReaction direction="left-to-right" evidence="1">
        <dbReference type="Rhea" id="RHEA:84216"/>
    </physiologicalReaction>
</comment>
<comment type="cofactor">
    <cofactor evidence="1">
        <name>FAD</name>
        <dbReference type="ChEBI" id="CHEBI:57692"/>
    </cofactor>
    <text evidence="1">Binds 1 FAD per subunit.</text>
</comment>
<comment type="pathway">
    <text evidence="1">Membrane lipid metabolism; glycerophospholipid metabolism.</text>
</comment>
<comment type="miscellaneous">
    <text evidence="1">Reduction reaction proceeds via syn addition of hydrogen for double bonds.</text>
</comment>
<comment type="similarity">
    <text evidence="1">Belongs to the geranylgeranyl reductase family. DGGGPL reductase subfamily.</text>
</comment>
<evidence type="ECO:0000255" key="1">
    <source>
        <dbReference type="HAMAP-Rule" id="MF_01287"/>
    </source>
</evidence>
<sequence>MRELLDSEYDVIVIGAGPGGSMASYHSSINGAKTLLIDKSQEIGTPVRCAEAVPYLDEFGINPDPSFIRSKIDGGILVAPNGKKIIVKGGKTQGYVVERKIFDKHLAVRSANVGTKIAIKSRVVGLDYDGEKYTVIVNHLGQIYAIKAKIVIAADGVESSIAEMAGIKCKKKVTEICSCAEYEMTNVKLLDKNMMEFYFGDICPKGYVWIFPKGETANVGLGIIDSKKKAIDYLNEFLEHPLLEGRLDNATPIEFKCGGAPVGGPIEKTVADNFMVVGDAAGQISPISGGGIYLSLSCGSIAGKVAGEAIKSNNCSEDYLVEYENRWKEKYYKLLMDELKYKKVLQKFSEKELNALADAMDERLEEIDVAKIAFRAVKRAPSLLKYFKDII</sequence>
<proteinExistence type="inferred from homology"/>
<feature type="chain" id="PRO_0000351452" description="Digeranylgeranylglycerophospholipid reductase">
    <location>
        <begin position="1"/>
        <end position="391"/>
    </location>
</feature>
<feature type="binding site" evidence="1">
    <location>
        <position position="19"/>
    </location>
    <ligand>
        <name>FAD</name>
        <dbReference type="ChEBI" id="CHEBI:57692"/>
    </ligand>
</feature>
<feature type="binding site" evidence="1">
    <location>
        <position position="38"/>
    </location>
    <ligand>
        <name>FAD</name>
        <dbReference type="ChEBI" id="CHEBI:57692"/>
    </ligand>
</feature>
<feature type="binding site" evidence="1">
    <location>
        <position position="49"/>
    </location>
    <ligand>
        <name>FAD</name>
        <dbReference type="ChEBI" id="CHEBI:57692"/>
    </ligand>
</feature>
<feature type="binding site" evidence="1">
    <location>
        <position position="50"/>
    </location>
    <ligand>
        <name>FAD</name>
        <dbReference type="ChEBI" id="CHEBI:57692"/>
    </ligand>
</feature>
<feature type="binding site" evidence="1">
    <location>
        <position position="52"/>
    </location>
    <ligand>
        <name>FAD</name>
        <dbReference type="ChEBI" id="CHEBI:57692"/>
    </ligand>
</feature>
<feature type="binding site" evidence="1">
    <location>
        <position position="99"/>
    </location>
    <ligand>
        <name>FAD</name>
        <dbReference type="ChEBI" id="CHEBI:57692"/>
    </ligand>
</feature>
<feature type="binding site" evidence="1">
    <location>
        <position position="123"/>
    </location>
    <ligand>
        <name>FAD</name>
        <dbReference type="ChEBI" id="CHEBI:57692"/>
    </ligand>
</feature>
<feature type="binding site" evidence="1">
    <location>
        <position position="279"/>
    </location>
    <ligand>
        <name>FAD</name>
        <dbReference type="ChEBI" id="CHEBI:57692"/>
    </ligand>
</feature>
<feature type="binding site" evidence="1">
    <location>
        <position position="291"/>
    </location>
    <ligand>
        <name>FAD</name>
        <dbReference type="ChEBI" id="CHEBI:57692"/>
    </ligand>
</feature>
<feature type="binding site" evidence="1">
    <location>
        <position position="292"/>
    </location>
    <ligand>
        <name>FAD</name>
        <dbReference type="ChEBI" id="CHEBI:57692"/>
    </ligand>
</feature>
<feature type="binding site" evidence="1">
    <location>
        <position position="369"/>
    </location>
    <ligand>
        <name>a 2,3-bis-O-(geranylgeranyl)-sn-glycerol 1-phospholipid</name>
        <dbReference type="ChEBI" id="CHEBI:138140"/>
    </ligand>
</feature>
<reference key="1">
    <citation type="submission" date="2007-06" db="EMBL/GenBank/DDBJ databases">
        <title>Complete sequence of Methanococcus aeolicus Nankai-3.</title>
        <authorList>
            <consortium name="US DOE Joint Genome Institute"/>
            <person name="Copeland A."/>
            <person name="Lucas S."/>
            <person name="Lapidus A."/>
            <person name="Barry K."/>
            <person name="Glavina del Rio T."/>
            <person name="Dalin E."/>
            <person name="Tice H."/>
            <person name="Pitluck S."/>
            <person name="Chain P."/>
            <person name="Malfatti S."/>
            <person name="Shin M."/>
            <person name="Vergez L."/>
            <person name="Schmutz J."/>
            <person name="Larimer F."/>
            <person name="Land M."/>
            <person name="Hauser L."/>
            <person name="Kyrpides N."/>
            <person name="Lykidis A."/>
            <person name="Sieprawska-Lupa M."/>
            <person name="Whitman W.B."/>
            <person name="Richardson P."/>
        </authorList>
    </citation>
    <scope>NUCLEOTIDE SEQUENCE [LARGE SCALE GENOMIC DNA]</scope>
    <source>
        <strain>ATCC BAA-1280 / DSM 17508 / OCM 812 / Nankai-3</strain>
    </source>
</reference>